<evidence type="ECO:0000250" key="1">
    <source>
        <dbReference type="UniProtKB" id="P06493"/>
    </source>
</evidence>
<evidence type="ECO:0000250" key="2">
    <source>
        <dbReference type="UniProtKB" id="P24788"/>
    </source>
</evidence>
<evidence type="ECO:0000255" key="3">
    <source>
        <dbReference type="PROSITE-ProRule" id="PRU00159"/>
    </source>
</evidence>
<evidence type="ECO:0000255" key="4">
    <source>
        <dbReference type="PROSITE-ProRule" id="PRU10027"/>
    </source>
</evidence>
<evidence type="ECO:0000256" key="5">
    <source>
        <dbReference type="SAM" id="MobiDB-lite"/>
    </source>
</evidence>
<evidence type="ECO:0000269" key="6">
    <source>
    </source>
</evidence>
<evidence type="ECO:0000269" key="7">
    <source>
    </source>
</evidence>
<evidence type="ECO:0000269" key="8">
    <source>
    </source>
</evidence>
<evidence type="ECO:0000269" key="9">
    <source>
    </source>
</evidence>
<evidence type="ECO:0000269" key="10">
    <source>
    </source>
</evidence>
<evidence type="ECO:0000269" key="11">
    <source>
    </source>
</evidence>
<evidence type="ECO:0000269" key="12">
    <source>
    </source>
</evidence>
<evidence type="ECO:0000269" key="13">
    <source>
    </source>
</evidence>
<evidence type="ECO:0000269" key="14">
    <source>
    </source>
</evidence>
<evidence type="ECO:0000269" key="15">
    <source>
    </source>
</evidence>
<evidence type="ECO:0000269" key="16">
    <source>
    </source>
</evidence>
<evidence type="ECO:0000269" key="17">
    <source>
    </source>
</evidence>
<evidence type="ECO:0000269" key="18">
    <source>
    </source>
</evidence>
<evidence type="ECO:0000269" key="19">
    <source>
    </source>
</evidence>
<evidence type="ECO:0000269" key="20">
    <source>
    </source>
</evidence>
<evidence type="ECO:0000303" key="21">
    <source>
    </source>
</evidence>
<evidence type="ECO:0000303" key="22">
    <source>
    </source>
</evidence>
<evidence type="ECO:0000303" key="23">
    <source>
    </source>
</evidence>
<evidence type="ECO:0000303" key="24">
    <source>
    </source>
</evidence>
<evidence type="ECO:0000303" key="25">
    <source>
    </source>
</evidence>
<evidence type="ECO:0000303" key="26">
    <source ref="6"/>
</evidence>
<evidence type="ECO:0000305" key="27"/>
<evidence type="ECO:0007744" key="28">
    <source>
    </source>
</evidence>
<evidence type="ECO:0007744" key="29">
    <source>
    </source>
</evidence>
<evidence type="ECO:0007744" key="30">
    <source>
    </source>
</evidence>
<evidence type="ECO:0007744" key="31">
    <source>
    </source>
</evidence>
<evidence type="ECO:0007744" key="32">
    <source>
    </source>
</evidence>
<evidence type="ECO:0007744" key="33">
    <source>
    </source>
</evidence>
<evidence type="ECO:0007744" key="34">
    <source>
    </source>
</evidence>
<evidence type="ECO:0007829" key="35">
    <source>
        <dbReference type="PDB" id="7UKZ"/>
    </source>
</evidence>
<reference key="1">
    <citation type="journal article" date="1990" name="Proc. Natl. Acad. Sci. U.S.A.">
        <title>Increased expression of a 58-kDa protein kinase leads to changes in the CHO cell cycle.</title>
        <authorList>
            <person name="Bunnell B.A."/>
            <person name="Heath L.S."/>
            <person name="Adams D.E."/>
            <person name="Lahti J.M."/>
            <person name="Kidd V.J."/>
        </authorList>
    </citation>
    <scope>NUCLEOTIDE SEQUENCE [MRNA] (ISOFORM 7)</scope>
    <scope>FUNCTION</scope>
    <source>
        <tissue>Liver</tissue>
    </source>
</reference>
<reference key="2">
    <citation type="journal article" date="1991" name="Proc. Natl. Acad. Sci. U.S.A.">
        <authorList>
            <person name="Bunnell B.A."/>
            <person name="Heath L.S."/>
            <person name="Adams D.E."/>
            <person name="Lahti J.M."/>
            <person name="Kidd V.J."/>
        </authorList>
    </citation>
    <scope>ERRATUM OF PUBMED:2217177</scope>
    <scope>SEQUENCE REVISION</scope>
</reference>
<reference key="3">
    <citation type="journal article" date="1992" name="Genomics">
        <title>Structure and expression of the human p58clk-1 protein kinase chromosomal gene.</title>
        <authorList>
            <person name="Eipers P.G."/>
            <person name="Lahti J.M."/>
            <person name="Kidd V.J."/>
        </authorList>
    </citation>
    <scope>NUCLEOTIDE SEQUENCE [GENOMIC DNA] (ISOFORM 7)</scope>
    <scope>VARIANT GLN-601</scope>
    <source>
        <tissue>Hematopoietic</tissue>
    </source>
</reference>
<reference key="4">
    <citation type="journal article" date="1994" name="J. Biol. Chem.">
        <title>Molecular cloning and expression of alternatively spliced PITSLRE protein kinase isoforms.</title>
        <authorList>
            <person name="Xiang J."/>
            <person name="Lahti J.M."/>
            <person name="Grenet J.A."/>
            <person name="Easton J.B."/>
            <person name="Kidd V.J."/>
        </authorList>
    </citation>
    <scope>NUCLEOTIDE SEQUENCE [MRNA] (ISOFORMS SV1; 2; 3; 8 AND SV11)</scope>
    <scope>VARIANT CYS-57</scope>
    <scope>TISSUE SPECIFICITY</scope>
    <scope>SUBCELLULAR LOCATION</scope>
    <source>
        <tissue>Cervix carcinoma</tissue>
    </source>
</reference>
<reference key="5">
    <citation type="journal article" date="1998" name="Genome Res.">
        <title>Duplication of a genomic region containing the Cdc2L1-2 and MMP21-22 genes on human chromosome 1p36.3 and their linkage to D1Z2.</title>
        <authorList>
            <person name="Gururajan R."/>
            <person name="Lahti J.M."/>
            <person name="Grenet J.A."/>
            <person name="Easton J."/>
            <person name="Gruber I."/>
            <person name="Ambros P.F."/>
            <person name="Kidd V.J."/>
        </authorList>
    </citation>
    <scope>NUCLEOTIDE SEQUENCE [GENOMIC DNA / MRNA] (ISOFORMS SV1; SV4; SV5; SV9; SV10 AND SV11)</scope>
    <scope>TISSUE SPECIFICITY</scope>
    <source>
        <tissue>Cervix carcinoma</tissue>
    </source>
</reference>
<reference key="6">
    <citation type="submission" date="1999-07" db="EMBL/GenBank/DDBJ databases">
        <authorList>
            <person name="Govindan M.V."/>
            <person name="Warriar N."/>
        </authorList>
    </citation>
    <scope>NUCLEOTIDE SEQUENCE [MRNA] (ISOFORM SV11)</scope>
    <source>
        <tissue>Placenta</tissue>
    </source>
</reference>
<reference key="7">
    <citation type="journal article" date="2006" name="Nature">
        <title>The DNA sequence and biological annotation of human chromosome 1.</title>
        <authorList>
            <person name="Gregory S.G."/>
            <person name="Barlow K.F."/>
            <person name="McLay K.E."/>
            <person name="Kaul R."/>
            <person name="Swarbreck D."/>
            <person name="Dunham A."/>
            <person name="Scott C.E."/>
            <person name="Howe K.L."/>
            <person name="Woodfine K."/>
            <person name="Spencer C.C.A."/>
            <person name="Jones M.C."/>
            <person name="Gillson C."/>
            <person name="Searle S."/>
            <person name="Zhou Y."/>
            <person name="Kokocinski F."/>
            <person name="McDonald L."/>
            <person name="Evans R."/>
            <person name="Phillips K."/>
            <person name="Atkinson A."/>
            <person name="Cooper R."/>
            <person name="Jones C."/>
            <person name="Hall R.E."/>
            <person name="Andrews T.D."/>
            <person name="Lloyd C."/>
            <person name="Ainscough R."/>
            <person name="Almeida J.P."/>
            <person name="Ambrose K.D."/>
            <person name="Anderson F."/>
            <person name="Andrew R.W."/>
            <person name="Ashwell R.I.S."/>
            <person name="Aubin K."/>
            <person name="Babbage A.K."/>
            <person name="Bagguley C.L."/>
            <person name="Bailey J."/>
            <person name="Beasley H."/>
            <person name="Bethel G."/>
            <person name="Bird C.P."/>
            <person name="Bray-Allen S."/>
            <person name="Brown J.Y."/>
            <person name="Brown A.J."/>
            <person name="Buckley D."/>
            <person name="Burton J."/>
            <person name="Bye J."/>
            <person name="Carder C."/>
            <person name="Chapman J.C."/>
            <person name="Clark S.Y."/>
            <person name="Clarke G."/>
            <person name="Clee C."/>
            <person name="Cobley V."/>
            <person name="Collier R.E."/>
            <person name="Corby N."/>
            <person name="Coville G.J."/>
            <person name="Davies J."/>
            <person name="Deadman R."/>
            <person name="Dunn M."/>
            <person name="Earthrowl M."/>
            <person name="Ellington A.G."/>
            <person name="Errington H."/>
            <person name="Frankish A."/>
            <person name="Frankland J."/>
            <person name="French L."/>
            <person name="Garner P."/>
            <person name="Garnett J."/>
            <person name="Gay L."/>
            <person name="Ghori M.R.J."/>
            <person name="Gibson R."/>
            <person name="Gilby L.M."/>
            <person name="Gillett W."/>
            <person name="Glithero R.J."/>
            <person name="Grafham D.V."/>
            <person name="Griffiths C."/>
            <person name="Griffiths-Jones S."/>
            <person name="Grocock R."/>
            <person name="Hammond S."/>
            <person name="Harrison E.S.I."/>
            <person name="Hart E."/>
            <person name="Haugen E."/>
            <person name="Heath P.D."/>
            <person name="Holmes S."/>
            <person name="Holt K."/>
            <person name="Howden P.J."/>
            <person name="Hunt A.R."/>
            <person name="Hunt S.E."/>
            <person name="Hunter G."/>
            <person name="Isherwood J."/>
            <person name="James R."/>
            <person name="Johnson C."/>
            <person name="Johnson D."/>
            <person name="Joy A."/>
            <person name="Kay M."/>
            <person name="Kershaw J.K."/>
            <person name="Kibukawa M."/>
            <person name="Kimberley A.M."/>
            <person name="King A."/>
            <person name="Knights A.J."/>
            <person name="Lad H."/>
            <person name="Laird G."/>
            <person name="Lawlor S."/>
            <person name="Leongamornlert D.A."/>
            <person name="Lloyd D.M."/>
            <person name="Loveland J."/>
            <person name="Lovell J."/>
            <person name="Lush M.J."/>
            <person name="Lyne R."/>
            <person name="Martin S."/>
            <person name="Mashreghi-Mohammadi M."/>
            <person name="Matthews L."/>
            <person name="Matthews N.S.W."/>
            <person name="McLaren S."/>
            <person name="Milne S."/>
            <person name="Mistry S."/>
            <person name="Moore M.J.F."/>
            <person name="Nickerson T."/>
            <person name="O'Dell C.N."/>
            <person name="Oliver K."/>
            <person name="Palmeiri A."/>
            <person name="Palmer S.A."/>
            <person name="Parker A."/>
            <person name="Patel D."/>
            <person name="Pearce A.V."/>
            <person name="Peck A.I."/>
            <person name="Pelan S."/>
            <person name="Phelps K."/>
            <person name="Phillimore B.J."/>
            <person name="Plumb R."/>
            <person name="Rajan J."/>
            <person name="Raymond C."/>
            <person name="Rouse G."/>
            <person name="Saenphimmachak C."/>
            <person name="Sehra H.K."/>
            <person name="Sheridan E."/>
            <person name="Shownkeen R."/>
            <person name="Sims S."/>
            <person name="Skuce C.D."/>
            <person name="Smith M."/>
            <person name="Steward C."/>
            <person name="Subramanian S."/>
            <person name="Sycamore N."/>
            <person name="Tracey A."/>
            <person name="Tromans A."/>
            <person name="Van Helmond Z."/>
            <person name="Wall M."/>
            <person name="Wallis J.M."/>
            <person name="White S."/>
            <person name="Whitehead S.L."/>
            <person name="Wilkinson J.E."/>
            <person name="Willey D.L."/>
            <person name="Williams H."/>
            <person name="Wilming L."/>
            <person name="Wray P.W."/>
            <person name="Wu Z."/>
            <person name="Coulson A."/>
            <person name="Vaudin M."/>
            <person name="Sulston J.E."/>
            <person name="Durbin R.M."/>
            <person name="Hubbard T."/>
            <person name="Wooster R."/>
            <person name="Dunham I."/>
            <person name="Carter N.P."/>
            <person name="McVean G."/>
            <person name="Ross M.T."/>
            <person name="Harrow J."/>
            <person name="Olson M.V."/>
            <person name="Beck S."/>
            <person name="Rogers J."/>
            <person name="Bentley D.R."/>
        </authorList>
    </citation>
    <scope>NUCLEOTIDE SEQUENCE [LARGE SCALE GENOMIC DNA]</scope>
</reference>
<reference key="8">
    <citation type="journal article" date="2004" name="Genome Res.">
        <title>The status, quality, and expansion of the NIH full-length cDNA project: the Mammalian Gene Collection (MGC).</title>
        <authorList>
            <consortium name="The MGC Project Team"/>
        </authorList>
    </citation>
    <scope>NUCLEOTIDE SEQUENCE [LARGE SCALE MRNA] (ISOFORM SV1)</scope>
    <source>
        <tissue>Brain</tissue>
    </source>
</reference>
<reference key="9">
    <citation type="journal article" date="1998" name="J. Cell Sci.">
        <title>The RNP protein, RNPS1, associates with specific isoforms of the p34cdc2-related PITSLRE protein kinases in vivo.</title>
        <authorList>
            <person name="Loyer P."/>
            <person name="Trembley J.H."/>
            <person name="Lahti J.M."/>
            <person name="Kidd V.J."/>
        </authorList>
    </citation>
    <scope>INTERACTION WITH RNPS1</scope>
</reference>
<reference key="10">
    <citation type="journal article" date="2000" name="Mol. Cell">
        <title>Identification and characterization of a novel cell cycle-regulated internal ribosome entry site.</title>
        <authorList>
            <person name="Cornelis S."/>
            <person name="Bruynooghe Y."/>
            <person name="Denecker G."/>
            <person name="Van Huffel S."/>
            <person name="Tinton S."/>
            <person name="Beyaert R."/>
        </authorList>
    </citation>
    <scope>ALTERNATIVE INITIATION (ISOFORM 7)</scope>
    <scope>INDUCTION</scope>
</reference>
<reference key="11">
    <citation type="journal article" date="2003" name="Biochem. Biophys. Res. Commun.">
        <title>The cyclin-dependent kinase 11(p46) isoform interacts with RanBPM.</title>
        <authorList>
            <person name="Mikolajczyk M."/>
            <person name="Shi J."/>
            <person name="Vaillancourt R.R."/>
            <person name="Sachs N.A."/>
            <person name="Nelson M."/>
        </authorList>
    </citation>
    <scope>INTERACTION WITH RANBP9</scope>
    <scope>AUTOPHOSPHORYLATION</scope>
    <scope>SUBCELLULAR LOCATION</scope>
</reference>
<reference key="12">
    <citation type="journal article" date="2003" name="J. Biol. Chem.">
        <title>CDK11 complexes promote pre-mRNA splicing.</title>
        <authorList>
            <person name="Hu D."/>
            <person name="Mayeda A."/>
            <person name="Trembley J.H."/>
            <person name="Lahti J.M."/>
            <person name="Kidd V.J."/>
        </authorList>
    </citation>
    <scope>FUNCTION</scope>
    <scope>SUBCELLULAR LOCATION</scope>
    <scope>INTERACTION WITH CCNL1 AND SFRS7</scope>
</reference>
<reference key="13">
    <citation type="journal article" date="2003" name="J. Biol. Chem.">
        <title>The C-terminal kinase domain of the p34cdc2-related PITSLRE protein kinase (p110C) associates with p21-activated kinase 1 and inhibits its activity during anoikis.</title>
        <authorList>
            <person name="Chen S."/>
            <person name="Yin X."/>
            <person name="Zhu X."/>
            <person name="Yan J."/>
            <person name="Ji S."/>
            <person name="Chen C."/>
            <person name="Cai M."/>
            <person name="Zhang S."/>
            <person name="Zong H."/>
            <person name="Hu Y."/>
            <person name="Yuan Z."/>
            <person name="Shen Z."/>
            <person name="Gu J."/>
        </authorList>
    </citation>
    <scope>FUNCTION</scope>
    <scope>INTERACTION WITH PAK1</scope>
</reference>
<reference key="14">
    <citation type="journal article" date="2005" name="Biochem. Biophys. Res. Commun.">
        <title>The cyclin-dependent kinase 11 interacts with 14-3-3 proteins.</title>
        <authorList>
            <person name="Feng Y."/>
            <person name="Qi W."/>
            <person name="Martinez J."/>
            <person name="Nelson M.A."/>
        </authorList>
    </citation>
    <scope>PHOSPHORYLATION AT SER-115</scope>
</reference>
<reference key="15">
    <citation type="journal article" date="2006" name="Cell">
        <title>Global, in vivo, and site-specific phosphorylation dynamics in signaling networks.</title>
        <authorList>
            <person name="Olsen J.V."/>
            <person name="Blagoev B."/>
            <person name="Gnad F."/>
            <person name="Macek B."/>
            <person name="Kumar C."/>
            <person name="Mortensen P."/>
            <person name="Mann M."/>
        </authorList>
    </citation>
    <scope>IDENTIFICATION BY MASS SPECTROMETRY [LARGE SCALE ANALYSIS]</scope>
    <source>
        <tissue>Cervix carcinoma</tissue>
    </source>
</reference>
<reference key="16">
    <citation type="journal article" date="2006" name="Nat. Biotechnol.">
        <title>A probability-based approach for high-throughput protein phosphorylation analysis and site localization.</title>
        <authorList>
            <person name="Beausoleil S.A."/>
            <person name="Villen J."/>
            <person name="Gerber S.A."/>
            <person name="Rush J."/>
            <person name="Gygi S.P."/>
        </authorList>
    </citation>
    <scope>PHOSPHORYLATION [LARGE SCALE ANALYSIS] AT THR-595</scope>
    <scope>IDENTIFICATION BY MASS SPECTROMETRY [LARGE SCALE ANALYSIS]</scope>
    <source>
        <tissue>Cervix carcinoma</tissue>
    </source>
</reference>
<reference key="17">
    <citation type="journal article" date="2006" name="Nat. Struct. Mol. Biol.">
        <title>Dichotomous but stringent substrate selection by the dual-function Cdk7 complex revealed by chemical genetics.</title>
        <authorList>
            <person name="Larochelle S."/>
            <person name="Batliner J."/>
            <person name="Gamble M.J."/>
            <person name="Barboza N.M."/>
            <person name="Kraybill B.C."/>
            <person name="Blethrow J.D."/>
            <person name="Shokat K.M."/>
            <person name="Fisher R.P."/>
        </authorList>
    </citation>
    <scope>PHOSPHORYLATION AT SER-482 AND THR-488 BY CDK7</scope>
</reference>
<reference key="18">
    <citation type="journal article" date="2008" name="J. Biol. Chem.">
        <title>Characterization of cyclin L1 and L2 interactions with CDK11 and splicing factors: influence of cyclin L isoforms on splice site selection.</title>
        <authorList>
            <person name="Loyer P."/>
            <person name="Trembley J.H."/>
            <person name="Grenet J.A."/>
            <person name="Busson A."/>
            <person name="Corlu A."/>
            <person name="Zhao W."/>
            <person name="Kocak M."/>
            <person name="Kidd V.J."/>
            <person name="Lahti J.M."/>
        </authorList>
    </citation>
    <scope>FUNCTION</scope>
    <scope>INTERACTION WITH CCNL1 AND CCNL2</scope>
</reference>
<reference key="19">
    <citation type="journal article" date="2008" name="J. Proteome Res.">
        <title>Combining protein-based IMAC, peptide-based IMAC, and MudPIT for efficient phosphoproteomic analysis.</title>
        <authorList>
            <person name="Cantin G.T."/>
            <person name="Yi W."/>
            <person name="Lu B."/>
            <person name="Park S.K."/>
            <person name="Xu T."/>
            <person name="Lee J.-D."/>
            <person name="Yates J.R. III"/>
        </authorList>
    </citation>
    <scope>IDENTIFICATION BY MASS SPECTROMETRY [LARGE SCALE ANALYSIS]</scope>
    <source>
        <tissue>Cervix carcinoma</tissue>
    </source>
</reference>
<reference key="20">
    <citation type="journal article" date="2008" name="Proc. Natl. Acad. Sci. U.S.A.">
        <title>A quantitative atlas of mitotic phosphorylation.</title>
        <authorList>
            <person name="Dephoure N."/>
            <person name="Zhou C."/>
            <person name="Villen J."/>
            <person name="Beausoleil S.A."/>
            <person name="Bakalarski C.E."/>
            <person name="Elledge S.J."/>
            <person name="Gygi S.P."/>
        </authorList>
    </citation>
    <scope>PHOSPHORYLATION [LARGE SCALE ANALYSIS] AT TYR-594 AND THR-595</scope>
    <scope>IDENTIFICATION BY MASS SPECTROMETRY [LARGE SCALE ANALYSIS]</scope>
    <source>
        <tissue>Cervix carcinoma</tissue>
    </source>
</reference>
<reference key="21">
    <citation type="journal article" date="2009" name="Sci. Signal.">
        <title>Quantitative phosphoproteomic analysis of T cell receptor signaling reveals system-wide modulation of protein-protein interactions.</title>
        <authorList>
            <person name="Mayya V."/>
            <person name="Lundgren D.H."/>
            <person name="Hwang S.-I."/>
            <person name="Rezaul K."/>
            <person name="Wu L."/>
            <person name="Eng J.K."/>
            <person name="Rodionov V."/>
            <person name="Han D.K."/>
        </authorList>
    </citation>
    <scope>PHOSPHORYLATION [LARGE SCALE ANALYSIS] AT SER-589 AND THR-595</scope>
    <scope>IDENTIFICATION BY MASS SPECTROMETRY [LARGE SCALE ANALYSIS]</scope>
    <source>
        <tissue>Leukemic T-cell</tissue>
    </source>
</reference>
<reference key="22">
    <citation type="journal article" date="2010" name="Sci. Signal.">
        <title>Quantitative phosphoproteomics reveals widespread full phosphorylation site occupancy during mitosis.</title>
        <authorList>
            <person name="Olsen J.V."/>
            <person name="Vermeulen M."/>
            <person name="Santamaria A."/>
            <person name="Kumar C."/>
            <person name="Miller M.L."/>
            <person name="Jensen L.J."/>
            <person name="Gnad F."/>
            <person name="Cox J."/>
            <person name="Jensen T.S."/>
            <person name="Nigg E.A."/>
            <person name="Brunak S."/>
            <person name="Mann M."/>
        </authorList>
    </citation>
    <scope>PHOSPHORYLATION [LARGE SCALE ANALYSIS] AT THR-595</scope>
    <scope>IDENTIFICATION BY MASS SPECTROMETRY [LARGE SCALE ANALYSIS]</scope>
    <source>
        <tissue>Cervix carcinoma</tissue>
    </source>
</reference>
<reference key="23">
    <citation type="journal article" date="2011" name="Sci. Signal.">
        <title>System-wide temporal characterization of the proteome and phosphoproteome of human embryonic stem cell differentiation.</title>
        <authorList>
            <person name="Rigbolt K.T."/>
            <person name="Prokhorova T.A."/>
            <person name="Akimov V."/>
            <person name="Henningsen J."/>
            <person name="Johansen P.T."/>
            <person name="Kratchmarova I."/>
            <person name="Kassem M."/>
            <person name="Mann M."/>
            <person name="Olsen J.V."/>
            <person name="Blagoev B."/>
        </authorList>
    </citation>
    <scope>PHOSPHORYLATION [LARGE SCALE ANALYSIS] AT THR-595</scope>
    <scope>IDENTIFICATION BY MASS SPECTROMETRY [LARGE SCALE ANALYSIS]</scope>
</reference>
<reference key="24">
    <citation type="journal article" date="2013" name="J. Proteome Res.">
        <title>Toward a comprehensive characterization of a human cancer cell phosphoproteome.</title>
        <authorList>
            <person name="Zhou H."/>
            <person name="Di Palma S."/>
            <person name="Preisinger C."/>
            <person name="Peng M."/>
            <person name="Polat A.N."/>
            <person name="Heck A.J."/>
            <person name="Mohammed S."/>
        </authorList>
    </citation>
    <scope>PHOSPHORYLATION [LARGE SCALE ANALYSIS] AT THR-595</scope>
    <scope>IDENTIFICATION BY MASS SPECTROMETRY [LARGE SCALE ANALYSIS]</scope>
    <source>
        <tissue>Cervix carcinoma</tissue>
        <tissue>Erythroleukemia</tissue>
    </source>
</reference>
<reference key="25">
    <citation type="journal article" date="2014" name="J. Proteomics">
        <title>An enzyme assisted RP-RPLC approach for in-depth analysis of human liver phosphoproteome.</title>
        <authorList>
            <person name="Bian Y."/>
            <person name="Song C."/>
            <person name="Cheng K."/>
            <person name="Dong M."/>
            <person name="Wang F."/>
            <person name="Huang J."/>
            <person name="Sun D."/>
            <person name="Wang L."/>
            <person name="Ye M."/>
            <person name="Zou H."/>
        </authorList>
    </citation>
    <scope>IDENTIFICATION BY MASS SPECTROMETRY [LARGE SCALE ANALYSIS]</scope>
    <source>
        <tissue>Liver</tissue>
    </source>
</reference>
<reference key="26">
    <citation type="journal article" date="2015" name="PLoS ONE">
        <title>SP-R210 (Myo18A) isoforms as intrinsic modulators of macrophage priming and activation.</title>
        <authorList>
            <person name="Yang L."/>
            <person name="Carrillo M."/>
            <person name="Wu Y.M."/>
            <person name="DiAngelo S.L."/>
            <person name="Silveyra P."/>
            <person name="Umstead T.M."/>
            <person name="Halstead E.S."/>
            <person name="Davies M.L."/>
            <person name="Hu S."/>
            <person name="Floros J."/>
            <person name="McCormack F.X."/>
            <person name="Christensen N.D."/>
            <person name="Chroneos Z.C."/>
        </authorList>
    </citation>
    <scope>INTERACTION WITH MYO18A</scope>
</reference>
<reference key="27">
    <citation type="journal article" date="2017" name="Nat. Struct. Mol. Biol.">
        <title>Site-specific mapping of the human SUMO proteome reveals co-modification with phosphorylation.</title>
        <authorList>
            <person name="Hendriks I.A."/>
            <person name="Lyon D."/>
            <person name="Young C."/>
            <person name="Jensen L.J."/>
            <person name="Vertegaal A.C."/>
            <person name="Nielsen M.L."/>
        </authorList>
    </citation>
    <scope>SUMOYLATION [LARGE SCALE ANALYSIS] AT LYS-641</scope>
    <scope>IDENTIFICATION BY MASS SPECTROMETRY [LARGE SCALE ANALYSIS]</scope>
</reference>
<reference key="28">
    <citation type="journal article" date="2021" name="Vaccines (Basel)">
        <title>HSV-1 ICP22 Is a Selective Viral Repressor of Cellular RNA Polymerase II-Mediated Transcription Elongation.</title>
        <authorList>
            <person name="Isa N.F."/>
            <person name="Bensaude O."/>
            <person name="Aziz N.C."/>
            <person name="Murphy S."/>
        </authorList>
    </citation>
    <scope>INTERACTION WITH HHV-1 TRANSCRIPTIONAL REGULATOR ICP22 (MICROBIAL INFECTION)</scope>
</reference>
<reference key="29">
    <citation type="journal article" date="2007" name="Nature">
        <title>Patterns of somatic mutation in human cancer genomes.</title>
        <authorList>
            <person name="Greenman C."/>
            <person name="Stephens P."/>
            <person name="Smith R."/>
            <person name="Dalgliesh G.L."/>
            <person name="Hunter C."/>
            <person name="Bignell G."/>
            <person name="Davies H."/>
            <person name="Teague J."/>
            <person name="Butler A."/>
            <person name="Stevens C."/>
            <person name="Edkins S."/>
            <person name="O'Meara S."/>
            <person name="Vastrik I."/>
            <person name="Schmidt E.E."/>
            <person name="Avis T."/>
            <person name="Barthorpe S."/>
            <person name="Bhamra G."/>
            <person name="Buck G."/>
            <person name="Choudhury B."/>
            <person name="Clements J."/>
            <person name="Cole J."/>
            <person name="Dicks E."/>
            <person name="Forbes S."/>
            <person name="Gray K."/>
            <person name="Halliday K."/>
            <person name="Harrison R."/>
            <person name="Hills K."/>
            <person name="Hinton J."/>
            <person name="Jenkinson A."/>
            <person name="Jones D."/>
            <person name="Menzies A."/>
            <person name="Mironenko T."/>
            <person name="Perry J."/>
            <person name="Raine K."/>
            <person name="Richardson D."/>
            <person name="Shepherd R."/>
            <person name="Small A."/>
            <person name="Tofts C."/>
            <person name="Varian J."/>
            <person name="Webb T."/>
            <person name="West S."/>
            <person name="Widaa S."/>
            <person name="Yates A."/>
            <person name="Cahill D.P."/>
            <person name="Louis D.N."/>
            <person name="Goldstraw P."/>
            <person name="Nicholson A.G."/>
            <person name="Brasseur F."/>
            <person name="Looijenga L."/>
            <person name="Weber B.L."/>
            <person name="Chiew Y.-E."/>
            <person name="DeFazio A."/>
            <person name="Greaves M.F."/>
            <person name="Green A.R."/>
            <person name="Campbell P."/>
            <person name="Birney E."/>
            <person name="Easton D.F."/>
            <person name="Chenevix-Trench G."/>
            <person name="Tan M.-H."/>
            <person name="Khoo S.K."/>
            <person name="Teh B.T."/>
            <person name="Yuen S.T."/>
            <person name="Leung S.Y."/>
            <person name="Wooster R."/>
            <person name="Futreal P.A."/>
            <person name="Stratton M.R."/>
        </authorList>
    </citation>
    <scope>VARIANTS [LARGE SCALE ANALYSIS] CYS-57; TRP-201; LEU-414; ALA-452; VAL-463; SER-506; GLN-601; ASN-641 AND VAL-670</scope>
</reference>
<proteinExistence type="evidence at protein level"/>
<feature type="chain" id="PRO_0000024311" description="Cyclin-dependent kinase 11B">
    <location>
        <begin position="1"/>
        <end position="795"/>
    </location>
</feature>
<feature type="domain" description="Protein kinase" evidence="3">
    <location>
        <begin position="438"/>
        <end position="723"/>
    </location>
</feature>
<feature type="region of interest" description="Disordered" evidence="5">
    <location>
        <begin position="17"/>
        <end position="412"/>
    </location>
</feature>
<feature type="region of interest" description="Disordered" evidence="5">
    <location>
        <begin position="733"/>
        <end position="795"/>
    </location>
</feature>
<feature type="compositionally biased region" description="Basic and acidic residues" evidence="5">
    <location>
        <begin position="17"/>
        <end position="60"/>
    </location>
</feature>
<feature type="compositionally biased region" description="Basic residues" evidence="5">
    <location>
        <begin position="95"/>
        <end position="113"/>
    </location>
</feature>
<feature type="compositionally biased region" description="Basic and acidic residues" evidence="5">
    <location>
        <begin position="114"/>
        <end position="131"/>
    </location>
</feature>
<feature type="compositionally biased region" description="Basic and acidic residues" evidence="5">
    <location>
        <begin position="138"/>
        <end position="227"/>
    </location>
</feature>
<feature type="compositionally biased region" description="Basic and acidic residues" evidence="5">
    <location>
        <begin position="238"/>
        <end position="253"/>
    </location>
</feature>
<feature type="compositionally biased region" description="Basic and acidic residues" evidence="5">
    <location>
        <begin position="264"/>
        <end position="276"/>
    </location>
</feature>
<feature type="compositionally biased region" description="Low complexity" evidence="5">
    <location>
        <begin position="291"/>
        <end position="302"/>
    </location>
</feature>
<feature type="compositionally biased region" description="Acidic residues" evidence="5">
    <location>
        <begin position="303"/>
        <end position="364"/>
    </location>
</feature>
<feature type="compositionally biased region" description="Acidic residues" evidence="5">
    <location>
        <begin position="383"/>
        <end position="392"/>
    </location>
</feature>
<feature type="active site" description="Proton acceptor" evidence="3 4">
    <location>
        <position position="562"/>
    </location>
</feature>
<feature type="binding site" evidence="3">
    <location>
        <begin position="444"/>
        <end position="452"/>
    </location>
    <ligand>
        <name>ATP</name>
        <dbReference type="ChEBI" id="CHEBI:30616"/>
    </ligand>
</feature>
<feature type="binding site" evidence="3">
    <location>
        <position position="467"/>
    </location>
    <ligand>
        <name>ATP</name>
        <dbReference type="ChEBI" id="CHEBI:30616"/>
    </ligand>
</feature>
<feature type="modified residue" description="Phosphoserine" evidence="2">
    <location>
        <position position="47"/>
    </location>
</feature>
<feature type="modified residue" description="Phosphoserine" evidence="2">
    <location>
        <position position="72"/>
    </location>
</feature>
<feature type="modified residue" description="Phosphoserine" evidence="10">
    <location>
        <position position="115"/>
    </location>
</feature>
<feature type="modified residue" description="Phosphoserine" evidence="2">
    <location>
        <position position="283"/>
    </location>
</feature>
<feature type="modified residue" description="Phosphoserine; by CDK7" evidence="11">
    <location>
        <position position="482"/>
    </location>
</feature>
<feature type="modified residue" description="Phosphothreonine; by CDK7" evidence="11">
    <location>
        <position position="488"/>
    </location>
</feature>
<feature type="modified residue" description="Phosphoserine" evidence="30">
    <location>
        <position position="589"/>
    </location>
</feature>
<feature type="modified residue" description="Phosphotyrosine" evidence="29">
    <location>
        <position position="594"/>
    </location>
</feature>
<feature type="modified residue" description="Phosphothreonine" evidence="28 29 30 31 32 33">
    <location>
        <position position="595"/>
    </location>
</feature>
<feature type="modified residue" description="Phosphothreonine" evidence="2">
    <location>
        <position position="751"/>
    </location>
</feature>
<feature type="modified residue" description="Phosphoserine" evidence="2">
    <location>
        <position position="752"/>
    </location>
</feature>
<feature type="cross-link" description="Glycyl lysine isopeptide (Lys-Gly) (interchain with G-Cter in SUMO2)" evidence="34">
    <location>
        <position position="641"/>
    </location>
</feature>
<feature type="splice variant" id="VSP_018834" description="In isoform 7." evidence="23">
    <location>
        <begin position="1"/>
        <end position="356"/>
    </location>
</feature>
<feature type="splice variant" id="VSP_008275" description="In isoform SV4." evidence="25">
    <location>
        <begin position="1"/>
        <end position="269"/>
    </location>
</feature>
<feature type="splice variant" id="VSP_008274" description="In isoform SV11." evidence="24 25 26">
    <location>
        <begin position="1"/>
        <end position="217"/>
    </location>
</feature>
<feature type="splice variant" id="VSP_008273" description="In isoform SV5 and isoform SV10." evidence="22 25">
    <location>
        <begin position="1"/>
        <end position="34"/>
    </location>
</feature>
<feature type="splice variant" id="VSP_008276" description="In isoform 3." evidence="24">
    <location>
        <begin position="2"/>
        <end position="335"/>
    </location>
</feature>
<feature type="splice variant" id="VSP_008277" description="In isoform SV5 and isoform SV10." evidence="25">
    <original>LKN</original>
    <variation>MSQ</variation>
    <location>
        <begin position="35"/>
        <end position="37"/>
    </location>
</feature>
<feature type="splice variant" id="VSP_008278" description="In isoform 2, isoform SV5 and isoform 8." evidence="24 25">
    <location>
        <begin position="110"/>
        <end position="119"/>
    </location>
</feature>
<feature type="splice variant" id="VSP_008279" description="In isoform 2." evidence="24">
    <original>R</original>
    <variation>RGNDGVCLFR</variation>
    <location>
        <position position="165"/>
    </location>
</feature>
<feature type="splice variant" id="VSP_008280" description="In isoform SV1, isoform 2, isoform SV5, isoform 8, isoform SV10 and isoform SV11." evidence="21 22 24 25 26">
    <original>GEARPAPAQKPAQL</original>
    <variation>V</variation>
    <location>
        <begin position="252"/>
        <end position="265"/>
    </location>
</feature>
<feature type="sequence variant" id="VAR_041958" description="In dbSNP:rs752740049." evidence="13 18">
    <original>R</original>
    <variation>C</variation>
    <location>
        <position position="57"/>
    </location>
</feature>
<feature type="sequence variant" id="VAR_057775" description="In dbSNP:rs1642146425.">
    <original>R</original>
    <variation>W</variation>
    <location>
        <position position="93"/>
    </location>
</feature>
<feature type="sequence variant" id="VAR_062199" description="In dbSNP:rs1642144356.">
    <original>R</original>
    <variation>C</variation>
    <location>
        <position position="109"/>
    </location>
</feature>
<feature type="sequence variant" id="VAR_041959" description="In dbSNP:rs1557687207." evidence="13">
    <original>R</original>
    <variation>W</variation>
    <location>
        <position position="201"/>
    </location>
</feature>
<feature type="sequence variant" id="VAR_041960" description="In dbSNP:rs1241694892." evidence="13">
    <original>S</original>
    <variation>L</variation>
    <location>
        <position position="414"/>
    </location>
</feature>
<feature type="sequence variant" id="VAR_045577" evidence="13">
    <original>V</original>
    <variation>A</variation>
    <location>
        <position position="452"/>
    </location>
</feature>
<feature type="sequence variant" id="VAR_041961" evidence="13">
    <original>I</original>
    <variation>V</variation>
    <location>
        <position position="463"/>
    </location>
</feature>
<feature type="sequence variant" id="VAR_045578" evidence="13">
    <original>G</original>
    <variation>S</variation>
    <location>
        <position position="506"/>
    </location>
</feature>
<feature type="sequence variant" id="VAR_041962" description="In dbSNP:rs200190129." evidence="12 13">
    <original>L</original>
    <variation>Q</variation>
    <location>
        <position position="601"/>
    </location>
</feature>
<feature type="sequence variant" id="VAR_041963" description="In dbSNP:rs1059815." evidence="13">
    <original>K</original>
    <variation>N</variation>
    <location>
        <position position="641"/>
    </location>
</feature>
<feature type="sequence variant" id="VAR_041964" description="In dbSNP:rs1059811." evidence="13">
    <original>A</original>
    <variation>V</variation>
    <location>
        <position position="670"/>
    </location>
</feature>
<feature type="sequence conflict" description="In Ref. 4; AAA19582/AAA19583/AAA19586 and 5; AAC72077/AAC72079/AAC72080/AAC72081/AAC83662/AAC83664/AAC83665." ref="4 5">
    <original>A</original>
    <variation>V</variation>
    <location>
        <position position="97"/>
    </location>
</feature>
<feature type="sequence conflict" description="In Ref. 4; AAA19582/AAA19583 and 5; AAC72079." evidence="27" ref="4 5">
    <location>
        <position position="109"/>
    </location>
</feature>
<feature type="sequence conflict" description="In Ref. 4; AAA19582/AAA19583/AAA19586." evidence="27" ref="4">
    <original>E</original>
    <variation>K</variation>
    <location>
        <position position="126"/>
    </location>
</feature>
<feature type="sequence conflict" description="In Ref. 5; AAC72080." ref="5">
    <original>P</original>
    <variation>R</variation>
    <location>
        <position position="258"/>
    </location>
</feature>
<feature type="sequence conflict" description="In Ref. 6; AAF36538." evidence="27" ref="6">
    <original>S</original>
    <variation>T</variation>
    <location>
        <position position="320"/>
    </location>
</feature>
<feature type="sequence conflict" description="In Ref. 4; AAA19582/AAA19583/AAA19584/AAA19586 and 6; AAF36538." evidence="27" ref="4 6">
    <location>
        <begin position="324"/>
        <end position="326"/>
    </location>
</feature>
<feature type="sequence conflict" description="In Ref. 3; AAB59449." evidence="27" ref="3">
    <original>PA</original>
    <variation>LP</variation>
    <location>
        <begin position="411"/>
        <end position="412"/>
    </location>
</feature>
<feature type="sequence conflict" description="In Ref. 3; AAB59449." evidence="27" ref="3">
    <original>E</original>
    <variation>D</variation>
    <location>
        <position position="436"/>
    </location>
</feature>
<feature type="sequence conflict" description="In Ref. 6; AAF36538." evidence="27" ref="6">
    <original>H</original>
    <variation>Q</variation>
    <location>
        <position position="560"/>
    </location>
</feature>
<feature type="sequence conflict" description="In Ref. 6; AAF36538." evidence="27" ref="6">
    <original>N</original>
    <variation>T</variation>
    <location>
        <position position="567"/>
    </location>
</feature>
<feature type="sequence conflict" description="In Ref. 4; AAA19582/AAA19581/AAA19583/AAA19584 and 6; AAF36538." evidence="27" ref="4 6">
    <original>E</original>
    <variation>R</variation>
    <location>
        <position position="678"/>
    </location>
</feature>
<feature type="sequence conflict" description="In Ref. 3; AAB59449." evidence="27" ref="3">
    <original>D</original>
    <variation>E</variation>
    <location>
        <position position="694"/>
    </location>
</feature>
<feature type="sequence conflict" description="In Ref. 6; AAF36538." evidence="27" ref="6">
    <original>F</original>
    <variation>C</variation>
    <location>
        <position position="697"/>
    </location>
</feature>
<feature type="sequence conflict" description="In Ref. 3; AAB59449." evidence="27" ref="3">
    <original>I</original>
    <variation>L</variation>
    <location>
        <position position="712"/>
    </location>
</feature>
<feature type="sequence conflict" description="In Ref. 3; AAB59449." evidence="27" ref="3">
    <original>E</original>
    <variation>Q</variation>
    <location>
        <position position="715"/>
    </location>
</feature>
<feature type="sequence conflict" description="In Ref. 6; AAF36538." evidence="27" ref="6">
    <original>S</original>
    <variation>R</variation>
    <location>
        <position position="792"/>
    </location>
</feature>
<feature type="strand" evidence="35">
    <location>
        <begin position="442"/>
        <end position="447"/>
    </location>
</feature>
<feature type="strand" evidence="35">
    <location>
        <begin position="450"/>
        <end position="456"/>
    </location>
</feature>
<feature type="strand" evidence="35">
    <location>
        <begin position="463"/>
        <end position="468"/>
    </location>
</feature>
<feature type="helix" evidence="35">
    <location>
        <begin position="480"/>
        <end position="491"/>
    </location>
</feature>
<feature type="strand" evidence="35">
    <location>
        <begin position="500"/>
        <end position="506"/>
    </location>
</feature>
<feature type="turn" evidence="35">
    <location>
        <begin position="507"/>
        <end position="510"/>
    </location>
</feature>
<feature type="strand" evidence="35">
    <location>
        <begin position="511"/>
        <end position="517"/>
    </location>
</feature>
<feature type="strand" evidence="35">
    <location>
        <begin position="520"/>
        <end position="522"/>
    </location>
</feature>
<feature type="helix" evidence="35">
    <location>
        <begin position="523"/>
        <end position="528"/>
    </location>
</feature>
<feature type="helix" evidence="35">
    <location>
        <begin position="536"/>
        <end position="555"/>
    </location>
</feature>
<feature type="helix" evidence="35">
    <location>
        <begin position="565"/>
        <end position="567"/>
    </location>
</feature>
<feature type="strand" evidence="35">
    <location>
        <begin position="568"/>
        <end position="570"/>
    </location>
</feature>
<feature type="strand" evidence="35">
    <location>
        <begin position="576"/>
        <end position="578"/>
    </location>
</feature>
<feature type="helix" evidence="35">
    <location>
        <begin position="601"/>
        <end position="603"/>
    </location>
</feature>
<feature type="helix" evidence="35">
    <location>
        <begin position="606"/>
        <end position="609"/>
    </location>
</feature>
<feature type="helix" evidence="35">
    <location>
        <begin position="618"/>
        <end position="633"/>
    </location>
</feature>
<feature type="helix" evidence="35">
    <location>
        <begin position="643"/>
        <end position="654"/>
    </location>
</feature>
<feature type="turn" evidence="35">
    <location>
        <begin position="659"/>
        <end position="661"/>
    </location>
</feature>
<feature type="turn" evidence="35">
    <location>
        <begin position="663"/>
        <end position="667"/>
    </location>
</feature>
<feature type="helix" evidence="35">
    <location>
        <begin position="669"/>
        <end position="672"/>
    </location>
</feature>
<feature type="strand" evidence="35">
    <location>
        <begin position="674"/>
        <end position="676"/>
    </location>
</feature>
<feature type="turn" evidence="35">
    <location>
        <begin position="689"/>
        <end position="691"/>
    </location>
</feature>
<feature type="helix" evidence="35">
    <location>
        <begin position="694"/>
        <end position="703"/>
    </location>
</feature>
<feature type="turn" evidence="35">
    <location>
        <begin position="708"/>
        <end position="710"/>
    </location>
</feature>
<feature type="helix" evidence="35">
    <location>
        <begin position="714"/>
        <end position="718"/>
    </location>
</feature>
<feature type="helix" evidence="35">
    <location>
        <begin position="721"/>
        <end position="724"/>
    </location>
</feature>
<feature type="strand" evidence="35">
    <location>
        <begin position="725"/>
        <end position="727"/>
    </location>
</feature>
<feature type="helix" evidence="35">
    <location>
        <begin position="732"/>
        <end position="734"/>
    </location>
</feature>
<name>CD11B_HUMAN</name>
<protein>
    <recommendedName>
        <fullName>Cyclin-dependent kinase 11B</fullName>
        <ecNumber>2.7.11.22</ecNumber>
    </recommendedName>
    <alternativeName>
        <fullName>Cell division cycle 2-like protein kinase 1</fullName>
        <shortName>CLK-1</shortName>
    </alternativeName>
    <alternativeName>
        <fullName>Cell division protein kinase 11B</fullName>
    </alternativeName>
    <alternativeName>
        <fullName>Galactosyltransferase-associated protein kinase p58/GTA</fullName>
    </alternativeName>
    <alternativeName>
        <fullName>PITSLRE serine/threonine-protein kinase CDC2L1</fullName>
    </alternativeName>
    <alternativeName>
        <fullName>p58 CLK-1</fullName>
    </alternativeName>
</protein>
<sequence>MGDEKDSWKVKTLDEILQEKKRRKEQEEKAEIKRLKNSDDRDSKRDSLEEGELRDHRMEITIRNSPYRREDSMEDRGEEDDSLAIKPPQQMSRKEKAHHRKDEKRKEKRRHRSHSAEGGKHARVKEKEREHERRKRHREEQDKARREWERQKRREMAREHSRRERDRLEQLERKRERERKMREQQKEQREQKERERRAEERRKEREARREVSAHHRTMREDYSDKVKASHWSRSPPRPPRERFELGDGRKPGEARPAPAQKPAQLKEEKMEERDLLSDLQDISDSERKTSSAESSSAESGSGSEEEEEEEEEEEEEGSTSEESEEEEEEEEEEEEETGSNSEEASEQSAEEVSEEEMSEDEERENENHLLVVPESRFDRDSGESEEAEEEVGEGTPQSSALTEGDYVPDSPALSPIELKQELPKYLPALQGCRSVEEFQCLNRIEEGTYGVVYRAKDKKTDEIVALKRLKMEKEKEGFPITSLREINTILKAQHPNIVTVREIVVGSNMDKIYIVMNYVEHDLKSLMETMKQPFLPGEVKTLMIQLLRGVKHLHDNWILHRDLKTSNLLLSHAGILKVGDFGLAREYGSPLKAYTPVVVTLWYRAPELLLGAKEYSTAVDMWSVGCIFGELLTQKPLFPGKSEIDQINKVFKDLGTPSEKIWPGYSELPAVKKMTFSEHPYNNLRKRFGALLSDQGFDLMNKFLTYFPGRRISAEDGLKHEYFRETPLPIDPSMFPTWPAKSEQQRVKRGTSPRPPEGGLGYSQLGDDDLKETGFHLTTTNQGASAAGPGFSLKF</sequence>
<gene>
    <name type="primary">CDK11B</name>
    <name type="synonym">CDC2L1</name>
    <name type="synonym">CDK11</name>
    <name type="synonym">PITSLREA</name>
    <name type="synonym">PK58</name>
</gene>
<comment type="function">
    <text evidence="7 8 14 15">Plays multiple roles in cell cycle progression, cytokinesis and apoptosis. Involved in pre-mRNA splicing in a kinase activity-dependent manner. Isoform 7 may act as a negative regulator of normal cell cycle progression.</text>
</comment>
<comment type="catalytic activity">
    <reaction>
        <text>L-seryl-[protein] + ATP = O-phospho-L-seryl-[protein] + ADP + H(+)</text>
        <dbReference type="Rhea" id="RHEA:17989"/>
        <dbReference type="Rhea" id="RHEA-COMP:9863"/>
        <dbReference type="Rhea" id="RHEA-COMP:11604"/>
        <dbReference type="ChEBI" id="CHEBI:15378"/>
        <dbReference type="ChEBI" id="CHEBI:29999"/>
        <dbReference type="ChEBI" id="CHEBI:30616"/>
        <dbReference type="ChEBI" id="CHEBI:83421"/>
        <dbReference type="ChEBI" id="CHEBI:456216"/>
        <dbReference type="EC" id="2.7.11.22"/>
    </reaction>
</comment>
<comment type="catalytic activity">
    <reaction>
        <text>L-threonyl-[protein] + ATP = O-phospho-L-threonyl-[protein] + ADP + H(+)</text>
        <dbReference type="Rhea" id="RHEA:46608"/>
        <dbReference type="Rhea" id="RHEA-COMP:11060"/>
        <dbReference type="Rhea" id="RHEA-COMP:11605"/>
        <dbReference type="ChEBI" id="CHEBI:15378"/>
        <dbReference type="ChEBI" id="CHEBI:30013"/>
        <dbReference type="ChEBI" id="CHEBI:30616"/>
        <dbReference type="ChEBI" id="CHEBI:61977"/>
        <dbReference type="ChEBI" id="CHEBI:456216"/>
        <dbReference type="EC" id="2.7.11.22"/>
    </reaction>
</comment>
<comment type="cofactor">
    <cofactor>
        <name>Mg(2+)</name>
        <dbReference type="ChEBI" id="CHEBI:18420"/>
    </cofactor>
</comment>
<comment type="activity regulation">
    <text evidence="1">Phosphorylation at Thr-448 or Tyr-449 inactivates the enzyme, while phosphorylation at Thr-595 activates it.</text>
</comment>
<comment type="subunit">
    <text evidence="7 8 9 16 19">Cleaved isoform SV9 (p110C) binds to the serine/threonine kinase PAK1 and RANBP9. p110C interacts with RNPS1. Isoform 7, but not isoform SV9, nor its cleavage product p110C, interacts with CCND3. Interacts with CCNL1 and CCNL2. Forms complexes with pre-mRNA-splicing factors, including at least SRSF1, SRSF2 and SRSF7/SLU7. Interacts with isoform 5 of MYO18A (PubMed:25965346).</text>
</comment>
<comment type="subunit">
    <text evidence="17">(Microbial infection) Interacts with human herpes virus 1 (HHV-1) transcriptional regulator ICP22.</text>
</comment>
<comment type="interaction">
    <interactant intactId="EBI-1298">
        <id>P21127</id>
    </interactant>
    <interactant intactId="EBI-711990">
        <id>O00303</id>
        <label>EIF3F</label>
    </interactant>
    <organismsDiffer>false</organismsDiffer>
    <experiments>3</experiments>
</comment>
<comment type="interaction">
    <interactant intactId="EBI-1298">
        <id>P21127</id>
    </interactant>
    <interactant intactId="EBI-1307">
        <id>Q13153</id>
        <label>PAK1</label>
    </interactant>
    <organismsDiffer>false</organismsDiffer>
    <experiments>4</experiments>
</comment>
<comment type="subcellular location">
    <subcellularLocation>
        <location>Cytoplasm</location>
    </subcellularLocation>
    <subcellularLocation>
        <location>Nucleus</location>
    </subcellularLocation>
</comment>
<comment type="alternative products">
    <event type="alternative splicing"/>
    <event type="alternative initiation"/>
    <isoform>
        <id>P21127-1</id>
        <name>SV9</name>
        <name>CDK11-p110</name>
        <sequence type="displayed"/>
    </isoform>
    <isoform>
        <id>P21127-2</id>
        <name>SV1</name>
        <name>Alpha 2-1</name>
        <sequence type="described" ref="VSP_008280"/>
    </isoform>
    <isoform>
        <id>P21127-3</id>
        <name>2</name>
        <name>Alpha 2-2</name>
        <sequence type="described" ref="VSP_008278 VSP_008279 VSP_008280"/>
    </isoform>
    <isoform>
        <id>P21127-4</id>
        <name>3</name>
        <name>Alpha 1</name>
        <sequence type="described" ref="VSP_008276"/>
    </isoform>
    <isoform>
        <id>P21127-5</id>
        <name>SV4</name>
        <sequence type="described" ref="VSP_008275"/>
    </isoform>
    <isoform>
        <id>P21127-6</id>
        <name>SV5</name>
        <sequence type="described" ref="VSP_008273 VSP_008277 VSP_008278 VSP_008280"/>
    </isoform>
    <isoform>
        <id>P21127-8</id>
        <name>8</name>
        <name>Alpha 2-3</name>
        <sequence type="described" ref="VSP_008278 VSP_008280"/>
    </isoform>
    <isoform>
        <id>P21127-9</id>
        <name>SV10</name>
        <sequence type="described" ref="VSP_008273 VSP_008277 VSP_008280"/>
    </isoform>
    <isoform>
        <id>P21127-10</id>
        <name>SV11</name>
        <name>Alpha 2-4</name>
        <sequence type="described" ref="VSP_008274 VSP_008280"/>
    </isoform>
    <isoform>
        <id>P21127-12</id>
        <name>7</name>
        <name>CDK11-p58</name>
        <sequence type="described" ref="VSP_018834"/>
    </isoform>
</comment>
<comment type="tissue specificity">
    <text evidence="18 20">Expressed ubiquitously. Some evidence of isoform-specific tissue distribution.</text>
</comment>
<comment type="induction">
    <text evidence="6">Isoform 7 is induced in G2/M phase of the cell cycle.</text>
</comment>
<comment type="PTM">
    <text>During FAS- or TNF-induced apoptosis, isoform SV9 is cleaved by caspases to produce p110C, a fragment that contains the C-terminal kinase domain.</text>
</comment>
<comment type="PTM">
    <text evidence="10 11">Phosphorylation at Ser-115 creates a binding site for 14-3-3 proteins. p110C can be autophosphorylated.</text>
</comment>
<comment type="miscellaneous">
    <text>Duplicated gene. CDK11A and CDK11B encode almost identical protein kinases of 110 kDa that contain at their C-termini the open reading frame of a smaller 58 kDa isoform which is expressed following IRES-mediated alternative initiation of translation.</text>
</comment>
<comment type="miscellaneous">
    <molecule>Isoform 7</molecule>
    <text evidence="27">Produced by alternative initiation at Met-357 of isoform SV9 via an internal ribosomal entry site (IRES).</text>
</comment>
<comment type="similarity">
    <text evidence="27">Belongs to the protein kinase superfamily. CMGC Ser/Thr protein kinase family. CDC2/CDKX subfamily.</text>
</comment>
<comment type="caution">
    <text evidence="27">Many references talk about 'p110 isoforms' but it is not yet known if this refers to CDK11A and/or CDK11B or one/some of the isoforms of each.</text>
</comment>
<comment type="sequence caution" evidence="27">
    <conflict type="erroneous gene model prediction">
        <sequence resource="EMBL-CDS" id="AAB59449"/>
    </conflict>
</comment>
<comment type="sequence caution" evidence="27">
    <conflict type="erroneous gene model prediction">
        <sequence resource="EMBL-CDS" id="AAC83664"/>
    </conflict>
</comment>
<comment type="sequence caution" evidence="27">
    <conflict type="erroneous initiation">
        <sequence resource="EMBL-CDS" id="AAF36538"/>
    </conflict>
    <text>Extended N-terminus.</text>
</comment>
<organism>
    <name type="scientific">Homo sapiens</name>
    <name type="common">Human</name>
    <dbReference type="NCBI Taxonomy" id="9606"/>
    <lineage>
        <taxon>Eukaryota</taxon>
        <taxon>Metazoa</taxon>
        <taxon>Chordata</taxon>
        <taxon>Craniata</taxon>
        <taxon>Vertebrata</taxon>
        <taxon>Euteleostomi</taxon>
        <taxon>Mammalia</taxon>
        <taxon>Eutheria</taxon>
        <taxon>Euarchontoglires</taxon>
        <taxon>Primates</taxon>
        <taxon>Haplorrhini</taxon>
        <taxon>Catarrhini</taxon>
        <taxon>Hominidae</taxon>
        <taxon>Homo</taxon>
    </lineage>
</organism>
<dbReference type="EC" id="2.7.11.22"/>
<dbReference type="EMBL" id="M37712">
    <property type="protein sequence ID" value="AAA36406.1"/>
    <property type="molecule type" value="mRNA"/>
</dbReference>
<dbReference type="EMBL" id="M88563">
    <property type="protein sequence ID" value="AAB59449.1"/>
    <property type="status" value="ALT_SEQ"/>
    <property type="molecule type" value="Genomic_DNA"/>
</dbReference>
<dbReference type="EMBL" id="M88553">
    <property type="protein sequence ID" value="AAB59449.1"/>
    <property type="status" value="JOINED"/>
    <property type="molecule type" value="Genomic_DNA"/>
</dbReference>
<dbReference type="EMBL" id="M88554">
    <property type="protein sequence ID" value="AAB59449.1"/>
    <property type="status" value="JOINED"/>
    <property type="molecule type" value="Genomic_DNA"/>
</dbReference>
<dbReference type="EMBL" id="M88555">
    <property type="protein sequence ID" value="AAB59449.1"/>
    <property type="status" value="JOINED"/>
    <property type="molecule type" value="Genomic_DNA"/>
</dbReference>
<dbReference type="EMBL" id="M88558">
    <property type="protein sequence ID" value="AAB59449.1"/>
    <property type="status" value="JOINED"/>
    <property type="molecule type" value="Genomic_DNA"/>
</dbReference>
<dbReference type="EMBL" id="M88559">
    <property type="protein sequence ID" value="AAB59449.1"/>
    <property type="status" value="JOINED"/>
    <property type="molecule type" value="Genomic_DNA"/>
</dbReference>
<dbReference type="EMBL" id="M88560">
    <property type="protein sequence ID" value="AAB59449.1"/>
    <property type="status" value="JOINED"/>
    <property type="molecule type" value="Genomic_DNA"/>
</dbReference>
<dbReference type="EMBL" id="M88561">
    <property type="protein sequence ID" value="AAB59449.1"/>
    <property type="status" value="JOINED"/>
    <property type="molecule type" value="Genomic_DNA"/>
</dbReference>
<dbReference type="EMBL" id="M88562">
    <property type="protein sequence ID" value="AAB59449.1"/>
    <property type="status" value="JOINED"/>
    <property type="molecule type" value="Genomic_DNA"/>
</dbReference>
<dbReference type="EMBL" id="U04815">
    <property type="protein sequence ID" value="AAA19581.1"/>
    <property type="molecule type" value="mRNA"/>
</dbReference>
<dbReference type="EMBL" id="U04816">
    <property type="protein sequence ID" value="AAA19582.1"/>
    <property type="molecule type" value="mRNA"/>
</dbReference>
<dbReference type="EMBL" id="U04817">
    <property type="protein sequence ID" value="AAA19583.1"/>
    <property type="molecule type" value="mRNA"/>
</dbReference>
<dbReference type="EMBL" id="U04818">
    <property type="protein sequence ID" value="AAA19584.1"/>
    <property type="molecule type" value="mRNA"/>
</dbReference>
<dbReference type="EMBL" id="U04824">
    <property type="protein sequence ID" value="AAA19586.1"/>
    <property type="molecule type" value="mRNA"/>
</dbReference>
<dbReference type="EMBL" id="AF067512">
    <property type="protein sequence ID" value="AAC72077.1"/>
    <property type="molecule type" value="mRNA"/>
</dbReference>
<dbReference type="EMBL" id="AF067513">
    <property type="protein sequence ID" value="AAC72078.1"/>
    <property type="molecule type" value="mRNA"/>
</dbReference>
<dbReference type="EMBL" id="AF067514">
    <property type="protein sequence ID" value="AAC72079.1"/>
    <property type="molecule type" value="mRNA"/>
</dbReference>
<dbReference type="EMBL" id="AF067515">
    <property type="protein sequence ID" value="AAC72080.1"/>
    <property type="molecule type" value="mRNA"/>
</dbReference>
<dbReference type="EMBL" id="AF067516">
    <property type="protein sequence ID" value="AAC72081.1"/>
    <property type="molecule type" value="mRNA"/>
</dbReference>
<dbReference type="EMBL" id="AF067517">
    <property type="protein sequence ID" value="AAC72082.1"/>
    <property type="molecule type" value="mRNA"/>
</dbReference>
<dbReference type="EMBL" id="AF080683">
    <property type="protein sequence ID" value="AAC83662.1"/>
    <property type="molecule type" value="Genomic_DNA"/>
</dbReference>
<dbReference type="EMBL" id="AF080685">
    <property type="protein sequence ID" value="AAC83662.1"/>
    <property type="status" value="JOINED"/>
    <property type="molecule type" value="Genomic_DNA"/>
</dbReference>
<dbReference type="EMBL" id="AF080686">
    <property type="protein sequence ID" value="AAC83662.1"/>
    <property type="status" value="JOINED"/>
    <property type="molecule type" value="Genomic_DNA"/>
</dbReference>
<dbReference type="EMBL" id="AF080687">
    <property type="protein sequence ID" value="AAC83662.1"/>
    <property type="status" value="JOINED"/>
    <property type="molecule type" value="Genomic_DNA"/>
</dbReference>
<dbReference type="EMBL" id="AF080688">
    <property type="protein sequence ID" value="AAC83662.1"/>
    <property type="status" value="JOINED"/>
    <property type="molecule type" value="Genomic_DNA"/>
</dbReference>
<dbReference type="EMBL" id="AF092429">
    <property type="protein sequence ID" value="AAC83662.1"/>
    <property type="status" value="JOINED"/>
    <property type="molecule type" value="Genomic_DNA"/>
</dbReference>
<dbReference type="EMBL" id="AF092430">
    <property type="protein sequence ID" value="AAC83662.1"/>
    <property type="status" value="JOINED"/>
    <property type="molecule type" value="Genomic_DNA"/>
</dbReference>
<dbReference type="EMBL" id="AF080678">
    <property type="protein sequence ID" value="AAC83662.1"/>
    <property type="status" value="JOINED"/>
    <property type="molecule type" value="Genomic_DNA"/>
</dbReference>
<dbReference type="EMBL" id="AF080679">
    <property type="protein sequence ID" value="AAC83662.1"/>
    <property type="status" value="JOINED"/>
    <property type="molecule type" value="Genomic_DNA"/>
</dbReference>
<dbReference type="EMBL" id="AF080680">
    <property type="protein sequence ID" value="AAC83662.1"/>
    <property type="status" value="JOINED"/>
    <property type="molecule type" value="Genomic_DNA"/>
</dbReference>
<dbReference type="EMBL" id="AF080681">
    <property type="protein sequence ID" value="AAC83662.1"/>
    <property type="status" value="JOINED"/>
    <property type="molecule type" value="Genomic_DNA"/>
</dbReference>
<dbReference type="EMBL" id="AF080682">
    <property type="protein sequence ID" value="AAC83662.1"/>
    <property type="status" value="JOINED"/>
    <property type="molecule type" value="Genomic_DNA"/>
</dbReference>
<dbReference type="EMBL" id="AF080683">
    <property type="protein sequence ID" value="AAC83663.1"/>
    <property type="molecule type" value="Genomic_DNA"/>
</dbReference>
<dbReference type="EMBL" id="AF080685">
    <property type="protein sequence ID" value="AAC83663.1"/>
    <property type="status" value="JOINED"/>
    <property type="molecule type" value="Genomic_DNA"/>
</dbReference>
<dbReference type="EMBL" id="AF080686">
    <property type="protein sequence ID" value="AAC83663.1"/>
    <property type="status" value="JOINED"/>
    <property type="molecule type" value="Genomic_DNA"/>
</dbReference>
<dbReference type="EMBL" id="AF080687">
    <property type="protein sequence ID" value="AAC83663.1"/>
    <property type="status" value="JOINED"/>
    <property type="molecule type" value="Genomic_DNA"/>
</dbReference>
<dbReference type="EMBL" id="AF080688">
    <property type="protein sequence ID" value="AAC83663.1"/>
    <property type="status" value="JOINED"/>
    <property type="molecule type" value="Genomic_DNA"/>
</dbReference>
<dbReference type="EMBL" id="AF092429">
    <property type="protein sequence ID" value="AAC83663.1"/>
    <property type="status" value="JOINED"/>
    <property type="molecule type" value="Genomic_DNA"/>
</dbReference>
<dbReference type="EMBL" id="AF092430">
    <property type="protein sequence ID" value="AAC83663.1"/>
    <property type="status" value="JOINED"/>
    <property type="molecule type" value="Genomic_DNA"/>
</dbReference>
<dbReference type="EMBL" id="AF080678">
    <property type="protein sequence ID" value="AAC83663.1"/>
    <property type="status" value="JOINED"/>
    <property type="molecule type" value="Genomic_DNA"/>
</dbReference>
<dbReference type="EMBL" id="AF080679">
    <property type="protein sequence ID" value="AAC83663.1"/>
    <property type="status" value="JOINED"/>
    <property type="molecule type" value="Genomic_DNA"/>
</dbReference>
<dbReference type="EMBL" id="AF080680">
    <property type="protein sequence ID" value="AAC83663.1"/>
    <property type="status" value="JOINED"/>
    <property type="molecule type" value="Genomic_DNA"/>
</dbReference>
<dbReference type="EMBL" id="AF080681">
    <property type="protein sequence ID" value="AAC83663.1"/>
    <property type="status" value="JOINED"/>
    <property type="molecule type" value="Genomic_DNA"/>
</dbReference>
<dbReference type="EMBL" id="AF080682">
    <property type="protein sequence ID" value="AAC83663.1"/>
    <property type="status" value="JOINED"/>
    <property type="molecule type" value="Genomic_DNA"/>
</dbReference>
<dbReference type="EMBL" id="AF080683">
    <property type="protein sequence ID" value="AAC83664.1"/>
    <property type="status" value="ALT_SEQ"/>
    <property type="molecule type" value="Genomic_DNA"/>
</dbReference>
<dbReference type="EMBL" id="AF080685">
    <property type="protein sequence ID" value="AAC83664.1"/>
    <property type="status" value="JOINED"/>
    <property type="molecule type" value="Genomic_DNA"/>
</dbReference>
<dbReference type="EMBL" id="AF080686">
    <property type="protein sequence ID" value="AAC83664.1"/>
    <property type="status" value="JOINED"/>
    <property type="molecule type" value="Genomic_DNA"/>
</dbReference>
<dbReference type="EMBL" id="AF080687">
    <property type="protein sequence ID" value="AAC83664.1"/>
    <property type="status" value="JOINED"/>
    <property type="molecule type" value="Genomic_DNA"/>
</dbReference>
<dbReference type="EMBL" id="AF080688">
    <property type="protein sequence ID" value="AAC83664.1"/>
    <property type="status" value="JOINED"/>
    <property type="molecule type" value="Genomic_DNA"/>
</dbReference>
<dbReference type="EMBL" id="AF092429">
    <property type="protein sequence ID" value="AAC83664.1"/>
    <property type="status" value="JOINED"/>
    <property type="molecule type" value="Genomic_DNA"/>
</dbReference>
<dbReference type="EMBL" id="AF092430">
    <property type="protein sequence ID" value="AAC83664.1"/>
    <property type="status" value="JOINED"/>
    <property type="molecule type" value="Genomic_DNA"/>
</dbReference>
<dbReference type="EMBL" id="AF080678">
    <property type="protein sequence ID" value="AAC83664.1"/>
    <property type="status" value="JOINED"/>
    <property type="molecule type" value="Genomic_DNA"/>
</dbReference>
<dbReference type="EMBL" id="AF080679">
    <property type="protein sequence ID" value="AAC83664.1"/>
    <property type="status" value="JOINED"/>
    <property type="molecule type" value="Genomic_DNA"/>
</dbReference>
<dbReference type="EMBL" id="AF080680">
    <property type="protein sequence ID" value="AAC83664.1"/>
    <property type="status" value="JOINED"/>
    <property type="molecule type" value="Genomic_DNA"/>
</dbReference>
<dbReference type="EMBL" id="AF080681">
    <property type="protein sequence ID" value="AAC83664.1"/>
    <property type="status" value="JOINED"/>
    <property type="molecule type" value="Genomic_DNA"/>
</dbReference>
<dbReference type="EMBL" id="AF080682">
    <property type="protein sequence ID" value="AAC83664.1"/>
    <property type="status" value="JOINED"/>
    <property type="molecule type" value="Genomic_DNA"/>
</dbReference>
<dbReference type="EMBL" id="AF080683">
    <property type="protein sequence ID" value="AAC83665.1"/>
    <property type="molecule type" value="Genomic_DNA"/>
</dbReference>
<dbReference type="EMBL" id="AF080685">
    <property type="protein sequence ID" value="AAC83665.1"/>
    <property type="status" value="JOINED"/>
    <property type="molecule type" value="Genomic_DNA"/>
</dbReference>
<dbReference type="EMBL" id="AF080686">
    <property type="protein sequence ID" value="AAC83665.1"/>
    <property type="status" value="JOINED"/>
    <property type="molecule type" value="Genomic_DNA"/>
</dbReference>
<dbReference type="EMBL" id="AF080687">
    <property type="protein sequence ID" value="AAC83665.1"/>
    <property type="status" value="JOINED"/>
    <property type="molecule type" value="Genomic_DNA"/>
</dbReference>
<dbReference type="EMBL" id="AF080688">
    <property type="protein sequence ID" value="AAC83665.1"/>
    <property type="status" value="JOINED"/>
    <property type="molecule type" value="Genomic_DNA"/>
</dbReference>
<dbReference type="EMBL" id="AF092429">
    <property type="protein sequence ID" value="AAC83665.1"/>
    <property type="status" value="JOINED"/>
    <property type="molecule type" value="Genomic_DNA"/>
</dbReference>
<dbReference type="EMBL" id="AF092430">
    <property type="protein sequence ID" value="AAC83665.1"/>
    <property type="status" value="JOINED"/>
    <property type="molecule type" value="Genomic_DNA"/>
</dbReference>
<dbReference type="EMBL" id="AF080678">
    <property type="protein sequence ID" value="AAC83665.1"/>
    <property type="status" value="JOINED"/>
    <property type="molecule type" value="Genomic_DNA"/>
</dbReference>
<dbReference type="EMBL" id="AF080679">
    <property type="protein sequence ID" value="AAC83665.1"/>
    <property type="status" value="JOINED"/>
    <property type="molecule type" value="Genomic_DNA"/>
</dbReference>
<dbReference type="EMBL" id="AF080680">
    <property type="protein sequence ID" value="AAC83665.1"/>
    <property type="status" value="JOINED"/>
    <property type="molecule type" value="Genomic_DNA"/>
</dbReference>
<dbReference type="EMBL" id="AF080681">
    <property type="protein sequence ID" value="AAC83665.1"/>
    <property type="status" value="JOINED"/>
    <property type="molecule type" value="Genomic_DNA"/>
</dbReference>
<dbReference type="EMBL" id="AF080682">
    <property type="protein sequence ID" value="AAC83665.1"/>
    <property type="status" value="JOINED"/>
    <property type="molecule type" value="Genomic_DNA"/>
</dbReference>
<dbReference type="EMBL" id="AF080683">
    <property type="protein sequence ID" value="AAC83666.1"/>
    <property type="molecule type" value="Genomic_DNA"/>
</dbReference>
<dbReference type="EMBL" id="AF092430">
    <property type="protein sequence ID" value="AAC83666.1"/>
    <property type="status" value="JOINED"/>
    <property type="molecule type" value="Genomic_DNA"/>
</dbReference>
<dbReference type="EMBL" id="AF080678">
    <property type="protein sequence ID" value="AAC83666.1"/>
    <property type="status" value="JOINED"/>
    <property type="molecule type" value="Genomic_DNA"/>
</dbReference>
<dbReference type="EMBL" id="AF080679">
    <property type="protein sequence ID" value="AAC83666.1"/>
    <property type="status" value="JOINED"/>
    <property type="molecule type" value="Genomic_DNA"/>
</dbReference>
<dbReference type="EMBL" id="AF080680">
    <property type="protein sequence ID" value="AAC83666.1"/>
    <property type="status" value="JOINED"/>
    <property type="molecule type" value="Genomic_DNA"/>
</dbReference>
<dbReference type="EMBL" id="AF080681">
    <property type="protein sequence ID" value="AAC83666.1"/>
    <property type="status" value="JOINED"/>
    <property type="molecule type" value="Genomic_DNA"/>
</dbReference>
<dbReference type="EMBL" id="AF080682">
    <property type="protein sequence ID" value="AAC83666.1"/>
    <property type="status" value="JOINED"/>
    <property type="molecule type" value="Genomic_DNA"/>
</dbReference>
<dbReference type="EMBL" id="AF174497">
    <property type="protein sequence ID" value="AAF36538.1"/>
    <property type="status" value="ALT_INIT"/>
    <property type="molecule type" value="mRNA"/>
</dbReference>
<dbReference type="EMBL" id="FO704657">
    <property type="status" value="NOT_ANNOTATED_CDS"/>
    <property type="molecule type" value="Genomic_DNA"/>
</dbReference>
<dbReference type="EMBL" id="BC140714">
    <property type="protein sequence ID" value="AAI40715.1"/>
    <property type="molecule type" value="mRNA"/>
</dbReference>
<dbReference type="EMBL" id="BC171773">
    <property type="protein sequence ID" value="AAI71773.1"/>
    <property type="molecule type" value="mRNA"/>
</dbReference>
<dbReference type="CCDS" id="CCDS72682.1">
    <molecule id="P21127-9"/>
</dbReference>
<dbReference type="CCDS" id="CCDS72683.1">
    <molecule id="P21127-1"/>
</dbReference>
<dbReference type="CCDS" id="CCDS72684.1">
    <molecule id="P21127-2"/>
</dbReference>
<dbReference type="PIR" id="A38282">
    <property type="entry name" value="A38282"/>
</dbReference>
<dbReference type="PIR" id="B54024">
    <property type="entry name" value="B54024"/>
</dbReference>
<dbReference type="PIR" id="E54024">
    <property type="entry name" value="E54024"/>
</dbReference>
<dbReference type="PIR" id="F54024">
    <property type="entry name" value="F54024"/>
</dbReference>
<dbReference type="PIR" id="H54024">
    <property type="entry name" value="H54024"/>
</dbReference>
<dbReference type="PIR" id="T09568">
    <property type="entry name" value="T09568"/>
</dbReference>
<dbReference type="RefSeq" id="NP_001278274.1">
    <molecule id="P21127-8"/>
    <property type="nucleotide sequence ID" value="NM_001291345.2"/>
</dbReference>
<dbReference type="RefSeq" id="NP_001778.2">
    <molecule id="P21127-1"/>
    <property type="nucleotide sequence ID" value="NM_001787.3"/>
</dbReference>
<dbReference type="RefSeq" id="NP_277021.2">
    <molecule id="P21127-2"/>
    <property type="nucleotide sequence ID" value="NM_033486.3"/>
</dbReference>
<dbReference type="RefSeq" id="NP_277022.1">
    <molecule id="P21127-5"/>
    <property type="nucleotide sequence ID" value="NM_033487.3"/>
</dbReference>
<dbReference type="RefSeq" id="NP_277024.2">
    <molecule id="P21127-9"/>
    <property type="nucleotide sequence ID" value="NM_033489.3"/>
</dbReference>
<dbReference type="RefSeq" id="NP_277025.1">
    <molecule id="P21127-10"/>
    <property type="nucleotide sequence ID" value="NM_033490.3"/>
</dbReference>
<dbReference type="RefSeq" id="XP_016858415.1">
    <molecule id="P21127-3"/>
    <property type="nucleotide sequence ID" value="XM_017002926.3"/>
</dbReference>
<dbReference type="RefSeq" id="XP_047291284.1">
    <molecule id="P21127-1"/>
    <property type="nucleotide sequence ID" value="XM_047435328.1"/>
</dbReference>
<dbReference type="RefSeq" id="XP_047291286.1">
    <molecule id="P21127-1"/>
    <property type="nucleotide sequence ID" value="XM_047435330.1"/>
</dbReference>
<dbReference type="RefSeq" id="XP_047291316.1">
    <molecule id="P21127-6"/>
    <property type="nucleotide sequence ID" value="XM_047435360.1"/>
</dbReference>
<dbReference type="RefSeq" id="XP_047291317.1">
    <molecule id="P21127-8"/>
    <property type="nucleotide sequence ID" value="XM_047435361.1"/>
</dbReference>
<dbReference type="RefSeq" id="XP_047291318.1">
    <molecule id="P21127-2"/>
    <property type="nucleotide sequence ID" value="XM_047435362.1"/>
</dbReference>
<dbReference type="RefSeq" id="XP_054195780.1">
    <molecule id="P21127-1"/>
    <property type="nucleotide sequence ID" value="XM_054339805.1"/>
</dbReference>
<dbReference type="RefSeq" id="XP_054195781.1">
    <molecule id="P21127-1"/>
    <property type="nucleotide sequence ID" value="XM_054339806.1"/>
</dbReference>
<dbReference type="RefSeq" id="XP_054195785.1">
    <molecule id="P21127-3"/>
    <property type="nucleotide sequence ID" value="XM_054339810.1"/>
</dbReference>
<dbReference type="RefSeq" id="XP_054195789.1">
    <molecule id="P21127-6"/>
    <property type="nucleotide sequence ID" value="XM_054339814.1"/>
</dbReference>
<dbReference type="RefSeq" id="XP_054195790.1">
    <molecule id="P21127-8"/>
    <property type="nucleotide sequence ID" value="XM_054339815.1"/>
</dbReference>
<dbReference type="RefSeq" id="XP_054195791.1">
    <molecule id="P21127-2"/>
    <property type="nucleotide sequence ID" value="XM_054339816.1"/>
</dbReference>
<dbReference type="PDB" id="7UKZ">
    <property type="method" value="X-ray"/>
    <property type="resolution" value="2.60 A"/>
    <property type="chains" value="A/B/C/D/E/F=428-736"/>
</dbReference>
<dbReference type="PDBsum" id="7UKZ"/>
<dbReference type="SMR" id="P21127"/>
<dbReference type="BioGRID" id="107421">
    <property type="interactions" value="195"/>
</dbReference>
<dbReference type="ComplexPortal" id="CPX-345">
    <molecule id="P21127-12"/>
    <property type="entry name" value="Cyclin L2-CDK11B(p58) complex"/>
</dbReference>
<dbReference type="ComplexPortal" id="CPX-346">
    <molecule id="P21127-12"/>
    <property type="entry name" value="Cyclin L1-CDK11B(p58) complex"/>
</dbReference>
<dbReference type="ComplexPortal" id="CPX-348">
    <molecule id="P21127-1"/>
    <property type="entry name" value="Cyclin L1-CDK11B(p110) complex"/>
</dbReference>
<dbReference type="ComplexPortal" id="CPX-349">
    <molecule id="P21127-1"/>
    <property type="entry name" value="Cyclin L2-CDK11B(p110) complex"/>
</dbReference>
<dbReference type="CORUM" id="P21127"/>
<dbReference type="FunCoup" id="P21127">
    <property type="interactions" value="2963"/>
</dbReference>
<dbReference type="IntAct" id="P21127">
    <property type="interactions" value="63"/>
</dbReference>
<dbReference type="MINT" id="P21127"/>
<dbReference type="STRING" id="9606.ENSP00000464036"/>
<dbReference type="BindingDB" id="P21127"/>
<dbReference type="ChEMBL" id="CHEMBL5808"/>
<dbReference type="DrugCentral" id="P21127"/>
<dbReference type="GlyGen" id="P21127">
    <property type="glycosylation" value="1 site, 1 O-linked glycan (1 site)"/>
</dbReference>
<dbReference type="iPTMnet" id="P21127"/>
<dbReference type="PhosphoSitePlus" id="P21127"/>
<dbReference type="BioMuta" id="CDK11B"/>
<dbReference type="DMDM" id="34978359"/>
<dbReference type="CPTAC" id="non-CPTAC-6016"/>
<dbReference type="jPOST" id="P21127"/>
<dbReference type="MassIVE" id="P21127"/>
<dbReference type="PaxDb" id="9606-ENSP00000464036"/>
<dbReference type="PeptideAtlas" id="P21127"/>
<dbReference type="ProteomicsDB" id="53836">
    <molecule id="P21127-1"/>
</dbReference>
<dbReference type="ProteomicsDB" id="53837">
    <molecule id="P21127-10"/>
</dbReference>
<dbReference type="ProteomicsDB" id="53838">
    <molecule id="P21127-12"/>
</dbReference>
<dbReference type="ProteomicsDB" id="53839">
    <molecule id="P21127-2"/>
</dbReference>
<dbReference type="ProteomicsDB" id="53840">
    <molecule id="P21127-3"/>
</dbReference>
<dbReference type="ProteomicsDB" id="53841">
    <molecule id="P21127-4"/>
</dbReference>
<dbReference type="ProteomicsDB" id="53842">
    <molecule id="P21127-5"/>
</dbReference>
<dbReference type="ProteomicsDB" id="53843">
    <molecule id="P21127-6"/>
</dbReference>
<dbReference type="ProteomicsDB" id="53844">
    <molecule id="P21127-8"/>
</dbReference>
<dbReference type="ProteomicsDB" id="53845">
    <molecule id="P21127-9"/>
</dbReference>
<dbReference type="Pumba" id="P21127"/>
<dbReference type="Antibodypedia" id="62301">
    <property type="antibodies" value="133 antibodies from 21 providers"/>
</dbReference>
<dbReference type="DNASU" id="984"/>
<dbReference type="Ensembl" id="ENST00000340677.9">
    <molecule id="P21127-9"/>
    <property type="protein sequence ID" value="ENSP00000464016.2"/>
    <property type="gene ID" value="ENSG00000248333.9"/>
</dbReference>
<dbReference type="Ensembl" id="ENST00000341832.11">
    <molecule id="P21127-2"/>
    <property type="protein sequence ID" value="ENSP00000463048.2"/>
    <property type="gene ID" value="ENSG00000248333.9"/>
</dbReference>
<dbReference type="Ensembl" id="ENST00000407249.7">
    <molecule id="P21127-1"/>
    <property type="protein sequence ID" value="ENSP00000464036.2"/>
    <property type="gene ID" value="ENSG00000248333.9"/>
</dbReference>
<dbReference type="GeneID" id="984"/>
<dbReference type="KEGG" id="hsa:984"/>
<dbReference type="MANE-Select" id="ENST00000341832.11">
    <molecule id="P21127-2"/>
    <property type="protein sequence ID" value="ENSP00000463048.2"/>
    <property type="RefSeq nucleotide sequence ID" value="NM_033486.3"/>
    <property type="RefSeq protein sequence ID" value="NP_277021.2"/>
</dbReference>
<dbReference type="UCSC" id="uc031tmi.2">
    <property type="organism name" value="human"/>
</dbReference>
<dbReference type="AGR" id="HGNC:1729"/>
<dbReference type="CTD" id="984"/>
<dbReference type="DisGeNET" id="984"/>
<dbReference type="GeneCards" id="CDK11B"/>
<dbReference type="HGNC" id="HGNC:1729">
    <property type="gene designation" value="CDK11B"/>
</dbReference>
<dbReference type="HPA" id="ENSG00000248333">
    <property type="expression patterns" value="Low tissue specificity"/>
</dbReference>
<dbReference type="MIM" id="176873">
    <property type="type" value="gene"/>
</dbReference>
<dbReference type="neXtProt" id="NX_P21127"/>
<dbReference type="OpenTargets" id="ENSG00000248333"/>
<dbReference type="PharmGKB" id="PA26262"/>
<dbReference type="VEuPathDB" id="HostDB:ENSG00000248333"/>
<dbReference type="eggNOG" id="KOG0663">
    <property type="taxonomic scope" value="Eukaryota"/>
</dbReference>
<dbReference type="GeneTree" id="ENSGT00940000158459"/>
<dbReference type="InParanoid" id="P21127"/>
<dbReference type="OMA" id="YYNVMLG"/>
<dbReference type="OrthoDB" id="647at2759"/>
<dbReference type="PAN-GO" id="P21127">
    <property type="GO annotations" value="4 GO annotations based on evolutionary models"/>
</dbReference>
<dbReference type="PhylomeDB" id="P21127"/>
<dbReference type="TreeFam" id="TF101035"/>
<dbReference type="BRENDA" id="2.7.11.22">
    <property type="organism ID" value="2681"/>
</dbReference>
<dbReference type="PathwayCommons" id="P21127"/>
<dbReference type="Reactome" id="R-HSA-380270">
    <property type="pathway name" value="Recruitment of mitotic centrosome proteins and complexes"/>
</dbReference>
<dbReference type="SignaLink" id="P21127"/>
<dbReference type="SIGNOR" id="P21127"/>
<dbReference type="BioGRID-ORCS" id="984">
    <property type="hits" value="46 hits in 316 CRISPR screens"/>
</dbReference>
<dbReference type="CD-CODE" id="8C2F96ED">
    <property type="entry name" value="Centrosome"/>
</dbReference>
<dbReference type="ChiTaRS" id="CDK11B">
    <property type="organism name" value="human"/>
</dbReference>
<dbReference type="GeneWiki" id="CDC2L1"/>
<dbReference type="GenomeRNAi" id="984"/>
<dbReference type="Pharos" id="P21127">
    <property type="development level" value="Tchem"/>
</dbReference>
<dbReference type="PRO" id="PR:P21127"/>
<dbReference type="Proteomes" id="UP000005640">
    <property type="component" value="Chromosome 1"/>
</dbReference>
<dbReference type="RNAct" id="P21127">
    <property type="molecule type" value="protein"/>
</dbReference>
<dbReference type="Bgee" id="ENSG00000248333">
    <property type="expression patterns" value="Expressed in sural nerve and 95 other cell types or tissues"/>
</dbReference>
<dbReference type="ExpressionAtlas" id="P21127">
    <property type="expression patterns" value="baseline and differential"/>
</dbReference>
<dbReference type="GO" id="GO:0000307">
    <property type="term" value="C:cyclin-dependent protein kinase holoenzyme complex"/>
    <property type="evidence" value="ECO:0000250"/>
    <property type="project" value="ComplexPortal"/>
</dbReference>
<dbReference type="GO" id="GO:0005737">
    <property type="term" value="C:cytoplasm"/>
    <property type="evidence" value="ECO:0000304"/>
    <property type="project" value="ProtInc"/>
</dbReference>
<dbReference type="GO" id="GO:0005634">
    <property type="term" value="C:nucleus"/>
    <property type="evidence" value="ECO:0000314"/>
    <property type="project" value="UniProtKB"/>
</dbReference>
<dbReference type="GO" id="GO:0005524">
    <property type="term" value="F:ATP binding"/>
    <property type="evidence" value="ECO:0000314"/>
    <property type="project" value="UniProtKB"/>
</dbReference>
<dbReference type="GO" id="GO:0004693">
    <property type="term" value="F:cyclin-dependent protein serine/threonine kinase activity"/>
    <property type="evidence" value="ECO:0007669"/>
    <property type="project" value="UniProtKB-EC"/>
</dbReference>
<dbReference type="GO" id="GO:0004672">
    <property type="term" value="F:protein kinase activity"/>
    <property type="evidence" value="ECO:0000304"/>
    <property type="project" value="ProtInc"/>
</dbReference>
<dbReference type="GO" id="GO:0106310">
    <property type="term" value="F:protein serine kinase activity"/>
    <property type="evidence" value="ECO:0007669"/>
    <property type="project" value="RHEA"/>
</dbReference>
<dbReference type="GO" id="GO:0004674">
    <property type="term" value="F:protein serine/threonine kinase activity"/>
    <property type="evidence" value="ECO:0000314"/>
    <property type="project" value="UniProtKB"/>
</dbReference>
<dbReference type="GO" id="GO:0003723">
    <property type="term" value="F:RNA binding"/>
    <property type="evidence" value="ECO:0007005"/>
    <property type="project" value="UniProtKB"/>
</dbReference>
<dbReference type="GO" id="GO:0006915">
    <property type="term" value="P:apoptotic process"/>
    <property type="evidence" value="ECO:0000303"/>
    <property type="project" value="UniProtKB"/>
</dbReference>
<dbReference type="GO" id="GO:0000278">
    <property type="term" value="P:mitotic cell cycle"/>
    <property type="evidence" value="ECO:0000303"/>
    <property type="project" value="UniProtKB"/>
</dbReference>
<dbReference type="GO" id="GO:0006468">
    <property type="term" value="P:protein phosphorylation"/>
    <property type="evidence" value="ECO:0000314"/>
    <property type="project" value="UniProtKB"/>
</dbReference>
<dbReference type="GO" id="GO:0042981">
    <property type="term" value="P:regulation of apoptotic process"/>
    <property type="evidence" value="ECO:0000303"/>
    <property type="project" value="ComplexPortal"/>
</dbReference>
<dbReference type="GO" id="GO:0051726">
    <property type="term" value="P:regulation of cell cycle"/>
    <property type="evidence" value="ECO:0000318"/>
    <property type="project" value="GO_Central"/>
</dbReference>
<dbReference type="GO" id="GO:0001558">
    <property type="term" value="P:regulation of cell growth"/>
    <property type="evidence" value="ECO:0000270"/>
    <property type="project" value="UniProtKB"/>
</dbReference>
<dbReference type="GO" id="GO:0046605">
    <property type="term" value="P:regulation of centrosome cycle"/>
    <property type="evidence" value="ECO:0000303"/>
    <property type="project" value="ComplexPortal"/>
</dbReference>
<dbReference type="GO" id="GO:0006355">
    <property type="term" value="P:regulation of DNA-templated transcription"/>
    <property type="evidence" value="ECO:0000303"/>
    <property type="project" value="UniProtKB"/>
</dbReference>
<dbReference type="GO" id="GO:0050684">
    <property type="term" value="P:regulation of mRNA processing"/>
    <property type="evidence" value="ECO:0000314"/>
    <property type="project" value="UniProtKB"/>
</dbReference>
<dbReference type="GO" id="GO:0043484">
    <property type="term" value="P:regulation of RNA splicing"/>
    <property type="evidence" value="ECO:0000250"/>
    <property type="project" value="ComplexPortal"/>
</dbReference>
<dbReference type="CDD" id="cd07843">
    <property type="entry name" value="STKc_CDC2L1"/>
    <property type="match status" value="1"/>
</dbReference>
<dbReference type="FunFam" id="3.30.200.20:FF:000054">
    <property type="entry name" value="Cyclin-dependent kinase 11B"/>
    <property type="match status" value="1"/>
</dbReference>
<dbReference type="FunFam" id="1.10.510.10:FF:000124">
    <property type="entry name" value="cyclin-dependent kinase 11B isoform X1"/>
    <property type="match status" value="1"/>
</dbReference>
<dbReference type="Gene3D" id="3.30.200.20">
    <property type="entry name" value="Phosphorylase Kinase, domain 1"/>
    <property type="match status" value="1"/>
</dbReference>
<dbReference type="Gene3D" id="1.10.510.10">
    <property type="entry name" value="Transferase(Phosphotransferase) domain 1"/>
    <property type="match status" value="1"/>
</dbReference>
<dbReference type="InterPro" id="IPR050108">
    <property type="entry name" value="CDK"/>
</dbReference>
<dbReference type="InterPro" id="IPR045267">
    <property type="entry name" value="CDK11/PITSLRE_STKc"/>
</dbReference>
<dbReference type="InterPro" id="IPR011009">
    <property type="entry name" value="Kinase-like_dom_sf"/>
</dbReference>
<dbReference type="InterPro" id="IPR000719">
    <property type="entry name" value="Prot_kinase_dom"/>
</dbReference>
<dbReference type="InterPro" id="IPR008271">
    <property type="entry name" value="Ser/Thr_kinase_AS"/>
</dbReference>
<dbReference type="PANTHER" id="PTHR24056">
    <property type="entry name" value="CELL DIVISION PROTEIN KINASE"/>
    <property type="match status" value="1"/>
</dbReference>
<dbReference type="PANTHER" id="PTHR24056:SF107">
    <property type="entry name" value="CYCLIN-DEPENDENT KINASE 11A-RELATED"/>
    <property type="match status" value="1"/>
</dbReference>
<dbReference type="Pfam" id="PF00069">
    <property type="entry name" value="Pkinase"/>
    <property type="match status" value="1"/>
</dbReference>
<dbReference type="SMART" id="SM00220">
    <property type="entry name" value="S_TKc"/>
    <property type="match status" value="1"/>
</dbReference>
<dbReference type="SUPFAM" id="SSF56112">
    <property type="entry name" value="Protein kinase-like (PK-like)"/>
    <property type="match status" value="1"/>
</dbReference>
<dbReference type="PROSITE" id="PS50011">
    <property type="entry name" value="PROTEIN_KINASE_DOM"/>
    <property type="match status" value="1"/>
</dbReference>
<dbReference type="PROSITE" id="PS00108">
    <property type="entry name" value="PROTEIN_KINASE_ST"/>
    <property type="match status" value="1"/>
</dbReference>
<accession>P21127</accession>
<accession>B7ZVY7</accession>
<accession>J3KTL7</accession>
<accession>J3QR29</accession>
<accession>J3QR44</accession>
<accession>O95265</accession>
<accession>Q12817</accession>
<accession>Q12818</accession>
<accession>Q12819</accession>
<accession>Q12820</accession>
<accession>Q12822</accession>
<accession>Q8N530</accession>
<accession>Q9NZS5</accession>
<accession>Q9UBJ0</accession>
<accession>Q9UBQ1</accession>
<accession>Q9UBR0</accession>
<accession>Q9UNY2</accession>
<accession>Q9UP57</accession>
<accession>Q9UP58</accession>
<accession>Q9UP59</accession>
<keyword id="KW-0002">3D-structure</keyword>
<keyword id="KW-0024">Alternative initiation</keyword>
<keyword id="KW-0025">Alternative splicing</keyword>
<keyword id="KW-0053">Apoptosis</keyword>
<keyword id="KW-0067">ATP-binding</keyword>
<keyword id="KW-0131">Cell cycle</keyword>
<keyword id="KW-0963">Cytoplasm</keyword>
<keyword id="KW-1017">Isopeptide bond</keyword>
<keyword id="KW-0418">Kinase</keyword>
<keyword id="KW-0547">Nucleotide-binding</keyword>
<keyword id="KW-0539">Nucleus</keyword>
<keyword id="KW-0597">Phosphoprotein</keyword>
<keyword id="KW-1267">Proteomics identification</keyword>
<keyword id="KW-1185">Reference proteome</keyword>
<keyword id="KW-0723">Serine/threonine-protein kinase</keyword>
<keyword id="KW-0808">Transferase</keyword>
<keyword id="KW-0832">Ubl conjugation</keyword>